<comment type="similarity">
    <text evidence="2">Belongs to the TTC27 family.</text>
</comment>
<protein>
    <recommendedName>
        <fullName>Tetratricopeptide repeat protein 27 homolog</fullName>
        <shortName>TPR repeat protein 27 homolog</shortName>
    </recommendedName>
</protein>
<feature type="chain" id="PRO_0000355102" description="Tetratricopeptide repeat protein 27 homolog">
    <location>
        <begin position="1"/>
        <end position="853"/>
    </location>
</feature>
<feature type="repeat" description="TPR 1">
    <location>
        <begin position="486"/>
        <end position="519"/>
    </location>
</feature>
<feature type="repeat" description="TPR 2">
    <location>
        <begin position="525"/>
        <end position="558"/>
    </location>
</feature>
<feature type="repeat" description="TPR 3">
    <location>
        <begin position="560"/>
        <end position="593"/>
    </location>
</feature>
<feature type="repeat" description="TPR 4">
    <location>
        <begin position="594"/>
        <end position="627"/>
    </location>
</feature>
<feature type="repeat" description="TPR 5">
    <location>
        <begin position="629"/>
        <end position="661"/>
    </location>
</feature>
<feature type="repeat" description="TPR 6">
    <location>
        <begin position="662"/>
        <end position="695"/>
    </location>
</feature>
<feature type="region of interest" description="Disordered" evidence="1">
    <location>
        <begin position="324"/>
        <end position="345"/>
    </location>
</feature>
<feature type="compositionally biased region" description="Polar residues" evidence="1">
    <location>
        <begin position="332"/>
        <end position="342"/>
    </location>
</feature>
<dbReference type="EMBL" id="AAFI02000204">
    <property type="protein sequence ID" value="EAL60753.1"/>
    <property type="molecule type" value="Genomic_DNA"/>
</dbReference>
<dbReference type="RefSeq" id="XP_629168.1">
    <property type="nucleotide sequence ID" value="XM_629166.1"/>
</dbReference>
<dbReference type="SMR" id="Q54BW6"/>
<dbReference type="FunCoup" id="Q54BW6">
    <property type="interactions" value="1050"/>
</dbReference>
<dbReference type="STRING" id="44689.Q54BW6"/>
<dbReference type="GlyGen" id="Q54BW6">
    <property type="glycosylation" value="1 site"/>
</dbReference>
<dbReference type="PaxDb" id="44689-DDB0267137"/>
<dbReference type="EnsemblProtists" id="EAL60753">
    <property type="protein sequence ID" value="EAL60753"/>
    <property type="gene ID" value="DDB_G0293372"/>
</dbReference>
<dbReference type="GeneID" id="8629189"/>
<dbReference type="KEGG" id="ddi:DDB_G0293372"/>
<dbReference type="dictyBase" id="DDB_G0293372">
    <property type="gene designation" value="ttc27"/>
</dbReference>
<dbReference type="VEuPathDB" id="AmoebaDB:DDB_G0293372"/>
<dbReference type="eggNOG" id="KOG1128">
    <property type="taxonomic scope" value="Eukaryota"/>
</dbReference>
<dbReference type="HOGENOM" id="CLU_004905_2_0_1"/>
<dbReference type="InParanoid" id="Q54BW6"/>
<dbReference type="OMA" id="WNIRLIC"/>
<dbReference type="PhylomeDB" id="Q54BW6"/>
<dbReference type="PRO" id="PR:Q54BW6"/>
<dbReference type="Proteomes" id="UP000002195">
    <property type="component" value="Chromosome 6"/>
</dbReference>
<dbReference type="Gene3D" id="1.25.40.10">
    <property type="entry name" value="Tetratricopeptide repeat domain"/>
    <property type="match status" value="1"/>
</dbReference>
<dbReference type="InterPro" id="IPR011990">
    <property type="entry name" value="TPR-like_helical_dom_sf"/>
</dbReference>
<dbReference type="InterPro" id="IPR019734">
    <property type="entry name" value="TPR_rpt"/>
</dbReference>
<dbReference type="InterPro" id="IPR044244">
    <property type="entry name" value="TTC27/Emw1"/>
</dbReference>
<dbReference type="PANTHER" id="PTHR16193">
    <property type="entry name" value="TETRATRICOPEPTIDE REPEAT PROTEIN 27"/>
    <property type="match status" value="1"/>
</dbReference>
<dbReference type="PANTHER" id="PTHR16193:SF0">
    <property type="entry name" value="TETRATRICOPEPTIDE REPEAT PROTEIN 27"/>
    <property type="match status" value="1"/>
</dbReference>
<dbReference type="Pfam" id="PF13432">
    <property type="entry name" value="TPR_16"/>
    <property type="match status" value="1"/>
</dbReference>
<dbReference type="SMART" id="SM00028">
    <property type="entry name" value="TPR"/>
    <property type="match status" value="3"/>
</dbReference>
<dbReference type="SUPFAM" id="SSF48452">
    <property type="entry name" value="TPR-like"/>
    <property type="match status" value="1"/>
</dbReference>
<dbReference type="PROSITE" id="PS50005">
    <property type="entry name" value="TPR"/>
    <property type="match status" value="4"/>
</dbReference>
<dbReference type="PROSITE" id="PS50293">
    <property type="entry name" value="TPR_REGION"/>
    <property type="match status" value="1"/>
</dbReference>
<keyword id="KW-1185">Reference proteome</keyword>
<keyword id="KW-0677">Repeat</keyword>
<keyword id="KW-0802">TPR repeat</keyword>
<sequence length="853" mass="98424">MDNKKLNTLIESIDQWVIESNDEKISELYRQSSKADNEFEDIPILKDCITLAFNILLGDSLVGSFKTDLMKKLFLLDSLNNYKDNINEYFEKVNNNITSLNETPLNQLSVLLSGITFLNLYVQINWTGPTVQISPDFTLKNDNKSILELLEVDGETVYKKVKNPIFLYLSKICLVDNYSMLDSCKSSCWWSCRSVMYHQRSLKNATPTFKSLLNERFQIVTRFYSISTLLEDSEEFMDTSSSTTSESKKSIKEINGLKDLASRAIIEQSLVFNYFRQLNKIKESMERACEVSELDCALTGALGKRTRFQTFDTAQLVMEVKNCRQRDDSGDGDNNNEFNRNSSIKREVTNDDPTLLVRPSLIEEVKGQNILLRNVDQMLILLQCLNVKNQNSNNGLTTEEMLPYIQKTLEKSNNWIIHSMGLLIKSRLEIVSSKTAERAVLQIQALVDQYDDPTSSATERINAIYSTDYPARWDLEKEVAERFIGIGAAASAFEIFERLEMWDEAIKCLTFMGKNSRSEELVLQRLEIEPSPELYCVLGDLKSDEQFYIKGWELSKKRYSRAQRSLARFYLEREQYQLCIDAFQIALAINPLFPNSWFSLGCAAMKIEKWDTALNAFSRVVSLEPEEGEGWANLASIYMYQNKMDKASSALMEGLKHKRENWKMWENFLFCCIAIKDYQNAVIAINHIFDLNDKKVNLKLLSIIADHVVSKDQLDKQGISGSKMEKTVSELFGRLTSKLTNNPDLWRLYSSYHHRLGNVDKAIDLQQKACRSCESAHWEGEQSTFEKVLQFNTTLCDLYFQYPNTSNIYSAKLKVKSILKKCESSWKETEHYKNFEQLLIKLNNYESELLQKK</sequence>
<reference key="1">
    <citation type="journal article" date="2005" name="Nature">
        <title>The genome of the social amoeba Dictyostelium discoideum.</title>
        <authorList>
            <person name="Eichinger L."/>
            <person name="Pachebat J.A."/>
            <person name="Gloeckner G."/>
            <person name="Rajandream M.A."/>
            <person name="Sucgang R."/>
            <person name="Berriman M."/>
            <person name="Song J."/>
            <person name="Olsen R."/>
            <person name="Szafranski K."/>
            <person name="Xu Q."/>
            <person name="Tunggal B."/>
            <person name="Kummerfeld S."/>
            <person name="Madera M."/>
            <person name="Konfortov B.A."/>
            <person name="Rivero F."/>
            <person name="Bankier A.T."/>
            <person name="Lehmann R."/>
            <person name="Hamlin N."/>
            <person name="Davies R."/>
            <person name="Gaudet P."/>
            <person name="Fey P."/>
            <person name="Pilcher K."/>
            <person name="Chen G."/>
            <person name="Saunders D."/>
            <person name="Sodergren E.J."/>
            <person name="Davis P."/>
            <person name="Kerhornou A."/>
            <person name="Nie X."/>
            <person name="Hall N."/>
            <person name="Anjard C."/>
            <person name="Hemphill L."/>
            <person name="Bason N."/>
            <person name="Farbrother P."/>
            <person name="Desany B."/>
            <person name="Just E."/>
            <person name="Morio T."/>
            <person name="Rost R."/>
            <person name="Churcher C.M."/>
            <person name="Cooper J."/>
            <person name="Haydock S."/>
            <person name="van Driessche N."/>
            <person name="Cronin A."/>
            <person name="Goodhead I."/>
            <person name="Muzny D.M."/>
            <person name="Mourier T."/>
            <person name="Pain A."/>
            <person name="Lu M."/>
            <person name="Harper D."/>
            <person name="Lindsay R."/>
            <person name="Hauser H."/>
            <person name="James K.D."/>
            <person name="Quiles M."/>
            <person name="Madan Babu M."/>
            <person name="Saito T."/>
            <person name="Buchrieser C."/>
            <person name="Wardroper A."/>
            <person name="Felder M."/>
            <person name="Thangavelu M."/>
            <person name="Johnson D."/>
            <person name="Knights A."/>
            <person name="Loulseged H."/>
            <person name="Mungall K.L."/>
            <person name="Oliver K."/>
            <person name="Price C."/>
            <person name="Quail M.A."/>
            <person name="Urushihara H."/>
            <person name="Hernandez J."/>
            <person name="Rabbinowitsch E."/>
            <person name="Steffen D."/>
            <person name="Sanders M."/>
            <person name="Ma J."/>
            <person name="Kohara Y."/>
            <person name="Sharp S."/>
            <person name="Simmonds M.N."/>
            <person name="Spiegler S."/>
            <person name="Tivey A."/>
            <person name="Sugano S."/>
            <person name="White B."/>
            <person name="Walker D."/>
            <person name="Woodward J.R."/>
            <person name="Winckler T."/>
            <person name="Tanaka Y."/>
            <person name="Shaulsky G."/>
            <person name="Schleicher M."/>
            <person name="Weinstock G.M."/>
            <person name="Rosenthal A."/>
            <person name="Cox E.C."/>
            <person name="Chisholm R.L."/>
            <person name="Gibbs R.A."/>
            <person name="Loomis W.F."/>
            <person name="Platzer M."/>
            <person name="Kay R.R."/>
            <person name="Williams J.G."/>
            <person name="Dear P.H."/>
            <person name="Noegel A.A."/>
            <person name="Barrell B.G."/>
            <person name="Kuspa A."/>
        </authorList>
    </citation>
    <scope>NUCLEOTIDE SEQUENCE [LARGE SCALE GENOMIC DNA]</scope>
    <source>
        <strain>AX4</strain>
    </source>
</reference>
<accession>Q54BW6</accession>
<proteinExistence type="inferred from homology"/>
<gene>
    <name type="primary">ttc27</name>
    <name type="ORF">DDB_G0293372</name>
</gene>
<name>TTC27_DICDI</name>
<evidence type="ECO:0000256" key="1">
    <source>
        <dbReference type="SAM" id="MobiDB-lite"/>
    </source>
</evidence>
<evidence type="ECO:0000305" key="2"/>
<organism>
    <name type="scientific">Dictyostelium discoideum</name>
    <name type="common">Social amoeba</name>
    <dbReference type="NCBI Taxonomy" id="44689"/>
    <lineage>
        <taxon>Eukaryota</taxon>
        <taxon>Amoebozoa</taxon>
        <taxon>Evosea</taxon>
        <taxon>Eumycetozoa</taxon>
        <taxon>Dictyostelia</taxon>
        <taxon>Dictyosteliales</taxon>
        <taxon>Dictyosteliaceae</taxon>
        <taxon>Dictyostelium</taxon>
    </lineage>
</organism>